<name>NCLN_MOUSE</name>
<gene>
    <name type="primary">Ncln</name>
</gene>
<organism>
    <name type="scientific">Mus musculus</name>
    <name type="common">Mouse</name>
    <dbReference type="NCBI Taxonomy" id="10090"/>
    <lineage>
        <taxon>Eukaryota</taxon>
        <taxon>Metazoa</taxon>
        <taxon>Chordata</taxon>
        <taxon>Craniata</taxon>
        <taxon>Vertebrata</taxon>
        <taxon>Euteleostomi</taxon>
        <taxon>Mammalia</taxon>
        <taxon>Eutheria</taxon>
        <taxon>Euarchontoglires</taxon>
        <taxon>Glires</taxon>
        <taxon>Rodentia</taxon>
        <taxon>Myomorpha</taxon>
        <taxon>Muroidea</taxon>
        <taxon>Muridae</taxon>
        <taxon>Murinae</taxon>
        <taxon>Mus</taxon>
        <taxon>Mus</taxon>
    </lineage>
</organism>
<sequence>MLEEAGEVLENVLKASCLPLGFIVFLPAVLLLVAPPLPAADAAHEFTVYRMQQYDLQGQPYGTRNAVLNTEARTVDADVLSRRCVLMRLLDFSYEHYQKALRQSAGAVVIILPRAMAAVPQDVVRQFMEIEPEMLAMETVVPVYFAVEDEALLSIYEQTQAASASQGSASAAEVLLHTATANGFQMVTSGAQSQAVSDWLITSVEGRLTGLGGEDLPTIVIVAHYDAFGVAPWLSLGADSNGSGISVLLELARLFSRLYTYKRTHAAYNLLFFASGGGKFNYQGTKRWLEDSLDHTDSSLLQDNVAFVLCLDTVGRGSHLRLHVSKPPREGTLQHAFLRELETVAAHQFPDVSFSMVHKKINLADDVLAWEHERFAIRRLPAFTLSHLESHRAGPRSSIMDVRSRVDSKTLTRNTRIIAEALTRVIYNLTEKGTPPDMPVFTEQMQVQEEQIDSVMDWLTNQPRAAQLLDKDGTFLSTLEHFLSRYLKDVRQHHVKADKRDPEFVFYDQLKQVMNAYRVKPAIFDLLLALCIGAYLGMAYTAVQHFHVLYKTVQRLLLKAKAQ</sequence>
<accession>Q8VCM8</accession>
<accession>Q8C7Y4</accession>
<accession>Q9CX81</accession>
<protein>
    <recommendedName>
        <fullName evidence="4">BOS complex subunit NCLN</fullName>
    </recommendedName>
    <alternativeName>
        <fullName>Nicalin</fullName>
    </alternativeName>
    <alternativeName>
        <fullName>Nicastrin-like protein</fullName>
    </alternativeName>
</protein>
<evidence type="ECO:0000250" key="1">
    <source>
        <dbReference type="UniProtKB" id="Q6NZ07"/>
    </source>
</evidence>
<evidence type="ECO:0000250" key="2">
    <source>
        <dbReference type="UniProtKB" id="Q969V3"/>
    </source>
</evidence>
<evidence type="ECO:0000255" key="3"/>
<evidence type="ECO:0000305" key="4"/>
<reference key="1">
    <citation type="journal article" date="2005" name="Science">
        <title>The transcriptional landscape of the mammalian genome.</title>
        <authorList>
            <person name="Carninci P."/>
            <person name="Kasukawa T."/>
            <person name="Katayama S."/>
            <person name="Gough J."/>
            <person name="Frith M.C."/>
            <person name="Maeda N."/>
            <person name="Oyama R."/>
            <person name="Ravasi T."/>
            <person name="Lenhard B."/>
            <person name="Wells C."/>
            <person name="Kodzius R."/>
            <person name="Shimokawa K."/>
            <person name="Bajic V.B."/>
            <person name="Brenner S.E."/>
            <person name="Batalov S."/>
            <person name="Forrest A.R."/>
            <person name="Zavolan M."/>
            <person name="Davis M.J."/>
            <person name="Wilming L.G."/>
            <person name="Aidinis V."/>
            <person name="Allen J.E."/>
            <person name="Ambesi-Impiombato A."/>
            <person name="Apweiler R."/>
            <person name="Aturaliya R.N."/>
            <person name="Bailey T.L."/>
            <person name="Bansal M."/>
            <person name="Baxter L."/>
            <person name="Beisel K.W."/>
            <person name="Bersano T."/>
            <person name="Bono H."/>
            <person name="Chalk A.M."/>
            <person name="Chiu K.P."/>
            <person name="Choudhary V."/>
            <person name="Christoffels A."/>
            <person name="Clutterbuck D.R."/>
            <person name="Crowe M.L."/>
            <person name="Dalla E."/>
            <person name="Dalrymple B.P."/>
            <person name="de Bono B."/>
            <person name="Della Gatta G."/>
            <person name="di Bernardo D."/>
            <person name="Down T."/>
            <person name="Engstrom P."/>
            <person name="Fagiolini M."/>
            <person name="Faulkner G."/>
            <person name="Fletcher C.F."/>
            <person name="Fukushima T."/>
            <person name="Furuno M."/>
            <person name="Futaki S."/>
            <person name="Gariboldi M."/>
            <person name="Georgii-Hemming P."/>
            <person name="Gingeras T.R."/>
            <person name="Gojobori T."/>
            <person name="Green R.E."/>
            <person name="Gustincich S."/>
            <person name="Harbers M."/>
            <person name="Hayashi Y."/>
            <person name="Hensch T.K."/>
            <person name="Hirokawa N."/>
            <person name="Hill D."/>
            <person name="Huminiecki L."/>
            <person name="Iacono M."/>
            <person name="Ikeo K."/>
            <person name="Iwama A."/>
            <person name="Ishikawa T."/>
            <person name="Jakt M."/>
            <person name="Kanapin A."/>
            <person name="Katoh M."/>
            <person name="Kawasawa Y."/>
            <person name="Kelso J."/>
            <person name="Kitamura H."/>
            <person name="Kitano H."/>
            <person name="Kollias G."/>
            <person name="Krishnan S.P."/>
            <person name="Kruger A."/>
            <person name="Kummerfeld S.K."/>
            <person name="Kurochkin I.V."/>
            <person name="Lareau L.F."/>
            <person name="Lazarevic D."/>
            <person name="Lipovich L."/>
            <person name="Liu J."/>
            <person name="Liuni S."/>
            <person name="McWilliam S."/>
            <person name="Madan Babu M."/>
            <person name="Madera M."/>
            <person name="Marchionni L."/>
            <person name="Matsuda H."/>
            <person name="Matsuzawa S."/>
            <person name="Miki H."/>
            <person name="Mignone F."/>
            <person name="Miyake S."/>
            <person name="Morris K."/>
            <person name="Mottagui-Tabar S."/>
            <person name="Mulder N."/>
            <person name="Nakano N."/>
            <person name="Nakauchi H."/>
            <person name="Ng P."/>
            <person name="Nilsson R."/>
            <person name="Nishiguchi S."/>
            <person name="Nishikawa S."/>
            <person name="Nori F."/>
            <person name="Ohara O."/>
            <person name="Okazaki Y."/>
            <person name="Orlando V."/>
            <person name="Pang K.C."/>
            <person name="Pavan W.J."/>
            <person name="Pavesi G."/>
            <person name="Pesole G."/>
            <person name="Petrovsky N."/>
            <person name="Piazza S."/>
            <person name="Reed J."/>
            <person name="Reid J.F."/>
            <person name="Ring B.Z."/>
            <person name="Ringwald M."/>
            <person name="Rost B."/>
            <person name="Ruan Y."/>
            <person name="Salzberg S.L."/>
            <person name="Sandelin A."/>
            <person name="Schneider C."/>
            <person name="Schoenbach C."/>
            <person name="Sekiguchi K."/>
            <person name="Semple C.A."/>
            <person name="Seno S."/>
            <person name="Sessa L."/>
            <person name="Sheng Y."/>
            <person name="Shibata Y."/>
            <person name="Shimada H."/>
            <person name="Shimada K."/>
            <person name="Silva D."/>
            <person name="Sinclair B."/>
            <person name="Sperling S."/>
            <person name="Stupka E."/>
            <person name="Sugiura K."/>
            <person name="Sultana R."/>
            <person name="Takenaka Y."/>
            <person name="Taki K."/>
            <person name="Tammoja K."/>
            <person name="Tan S.L."/>
            <person name="Tang S."/>
            <person name="Taylor M.S."/>
            <person name="Tegner J."/>
            <person name="Teichmann S.A."/>
            <person name="Ueda H.R."/>
            <person name="van Nimwegen E."/>
            <person name="Verardo R."/>
            <person name="Wei C.L."/>
            <person name="Yagi K."/>
            <person name="Yamanishi H."/>
            <person name="Zabarovsky E."/>
            <person name="Zhu S."/>
            <person name="Zimmer A."/>
            <person name="Hide W."/>
            <person name="Bult C."/>
            <person name="Grimmond S.M."/>
            <person name="Teasdale R.D."/>
            <person name="Liu E.T."/>
            <person name="Brusic V."/>
            <person name="Quackenbush J."/>
            <person name="Wahlestedt C."/>
            <person name="Mattick J.S."/>
            <person name="Hume D.A."/>
            <person name="Kai C."/>
            <person name="Sasaki D."/>
            <person name="Tomaru Y."/>
            <person name="Fukuda S."/>
            <person name="Kanamori-Katayama M."/>
            <person name="Suzuki M."/>
            <person name="Aoki J."/>
            <person name="Arakawa T."/>
            <person name="Iida J."/>
            <person name="Imamura K."/>
            <person name="Itoh M."/>
            <person name="Kato T."/>
            <person name="Kawaji H."/>
            <person name="Kawagashira N."/>
            <person name="Kawashima T."/>
            <person name="Kojima M."/>
            <person name="Kondo S."/>
            <person name="Konno H."/>
            <person name="Nakano K."/>
            <person name="Ninomiya N."/>
            <person name="Nishio T."/>
            <person name="Okada M."/>
            <person name="Plessy C."/>
            <person name="Shibata K."/>
            <person name="Shiraki T."/>
            <person name="Suzuki S."/>
            <person name="Tagami M."/>
            <person name="Waki K."/>
            <person name="Watahiki A."/>
            <person name="Okamura-Oho Y."/>
            <person name="Suzuki H."/>
            <person name="Kawai J."/>
            <person name="Hayashizaki Y."/>
        </authorList>
    </citation>
    <scope>NUCLEOTIDE SEQUENCE [LARGE SCALE MRNA]</scope>
    <source>
        <strain>C57BL/6J</strain>
        <tissue>Cerebellum</tissue>
        <tissue>Head</tissue>
    </source>
</reference>
<reference key="2">
    <citation type="journal article" date="2004" name="Genome Res.">
        <title>The status, quality, and expansion of the NIH full-length cDNA project: the Mammalian Gene Collection (MGC).</title>
        <authorList>
            <consortium name="The MGC Project Team"/>
        </authorList>
    </citation>
    <scope>NUCLEOTIDE SEQUENCE [LARGE SCALE MRNA]</scope>
    <source>
        <strain>FVB/N</strain>
        <tissue>Salivary gland</tissue>
    </source>
</reference>
<reference key="3">
    <citation type="journal article" date="2010" name="Cell">
        <title>A tissue-specific atlas of mouse protein phosphorylation and expression.</title>
        <authorList>
            <person name="Huttlin E.L."/>
            <person name="Jedrychowski M.P."/>
            <person name="Elias J.E."/>
            <person name="Goswami T."/>
            <person name="Rad R."/>
            <person name="Beausoleil S.A."/>
            <person name="Villen J."/>
            <person name="Haas W."/>
            <person name="Sowa M.E."/>
            <person name="Gygi S.P."/>
        </authorList>
    </citation>
    <scope>IDENTIFICATION BY MASS SPECTROMETRY [LARGE SCALE ANALYSIS]</scope>
    <source>
        <tissue>Brown adipose tissue</tissue>
        <tissue>Heart</tissue>
        <tissue>Kidney</tissue>
        <tissue>Liver</tissue>
        <tissue>Lung</tissue>
        <tissue>Pancreas</tissue>
        <tissue>Spleen</tissue>
        <tissue>Testis</tissue>
    </source>
</reference>
<comment type="function">
    <text evidence="1 2">Component of the multi-pass translocon (MPT) complex that mediates insertion of multi-pass membrane proteins into the lipid bilayer of membranes. The MPT complex takes over after the SEC61 complex: following membrane insertion of the first few transmembrane segments of proteins by the SEC61 complex, the MPT complex occludes the lateral gate of the SEC61 complex to promote insertion of subsequent transmembrane regions (By similarity). May antagonize Nodal signaling and subsequent organization of axial structures during mesodermal patterning, via its interaction with NOMO (By similarity).</text>
</comment>
<comment type="subunit">
    <text evidence="2">Component of the back of Sec61 (BOS) complex, composed of NCLN/Nicalin, NOMO1 and TMEM147. The BOS complex is part of the multi-pass translocon (MPT) complex, composed of three subcomplexes, the GEL complex (composed of RAB5IF/OPTI and TMCO1), the BOS complex (composed of NCLN/Nicalin, NOMO1 and TMEM147) and the PAT complex (composed of WDR83OS/Asterix and CCDC47). The MPT complex associates with the SEC61 complex.</text>
</comment>
<comment type="subcellular location">
    <subcellularLocation>
        <location evidence="2">Endoplasmic reticulum membrane</location>
        <topology evidence="2">Single-pass membrane protein</topology>
    </subcellularLocation>
</comment>
<comment type="similarity">
    <text evidence="4">Belongs to the nicastrin family.</text>
</comment>
<comment type="sequence caution" evidence="4">
    <conflict type="erroneous initiation">
        <sequence resource="EMBL-CDS" id="BAB31708"/>
    </conflict>
    <text>Truncated N-terminus.</text>
</comment>
<keyword id="KW-0256">Endoplasmic reticulum</keyword>
<keyword id="KW-0325">Glycoprotein</keyword>
<keyword id="KW-0472">Membrane</keyword>
<keyword id="KW-1185">Reference proteome</keyword>
<keyword id="KW-0732">Signal</keyword>
<keyword id="KW-0812">Transmembrane</keyword>
<keyword id="KW-1133">Transmembrane helix</keyword>
<proteinExistence type="evidence at protein level"/>
<feature type="signal peptide" evidence="3">
    <location>
        <begin position="1"/>
        <end position="42"/>
    </location>
</feature>
<feature type="chain" id="PRO_0000019688" description="BOS complex subunit NCLN">
    <location>
        <begin position="43"/>
        <end position="563"/>
    </location>
</feature>
<feature type="topological domain" description="Lumenal" evidence="3">
    <location>
        <begin position="43"/>
        <end position="522"/>
    </location>
</feature>
<feature type="transmembrane region" description="Helical" evidence="3">
    <location>
        <begin position="523"/>
        <end position="543"/>
    </location>
</feature>
<feature type="topological domain" description="Cytoplasmic" evidence="3">
    <location>
        <begin position="544"/>
        <end position="563"/>
    </location>
</feature>
<feature type="glycosylation site" description="N-linked (GlcNAc...) asparagine" evidence="3">
    <location>
        <position position="241"/>
    </location>
</feature>
<feature type="glycosylation site" description="N-linked (GlcNAc...) asparagine" evidence="3">
    <location>
        <position position="428"/>
    </location>
</feature>
<feature type="sequence conflict" description="In Ref. 1; BAB31708." evidence="4" ref="1">
    <original>E</original>
    <variation>D</variation>
    <location>
        <position position="131"/>
    </location>
</feature>
<feature type="sequence conflict" description="In Ref. 1; BAB31708." evidence="4" ref="1">
    <original>Q</original>
    <variation>K</variation>
    <location>
        <position position="512"/>
    </location>
</feature>
<dbReference type="EMBL" id="AK019409">
    <property type="protein sequence ID" value="BAB31708.1"/>
    <property type="status" value="ALT_INIT"/>
    <property type="molecule type" value="mRNA"/>
</dbReference>
<dbReference type="EMBL" id="AK048954">
    <property type="protein sequence ID" value="BAC33498.1"/>
    <property type="molecule type" value="mRNA"/>
</dbReference>
<dbReference type="EMBL" id="BC019501">
    <property type="protein sequence ID" value="AAH19501.2"/>
    <property type="molecule type" value="mRNA"/>
</dbReference>
<dbReference type="CCDS" id="CCDS36000.1"/>
<dbReference type="RefSeq" id="NP_598770.1">
    <property type="nucleotide sequence ID" value="NM_134009.3"/>
</dbReference>
<dbReference type="SMR" id="Q8VCM8"/>
<dbReference type="BioGRID" id="222083">
    <property type="interactions" value="6"/>
</dbReference>
<dbReference type="FunCoup" id="Q8VCM8">
    <property type="interactions" value="1887"/>
</dbReference>
<dbReference type="IntAct" id="Q8VCM8">
    <property type="interactions" value="1"/>
</dbReference>
<dbReference type="MINT" id="Q8VCM8"/>
<dbReference type="STRING" id="10090.ENSMUSP00000020463"/>
<dbReference type="MEROPS" id="M28.978"/>
<dbReference type="GlyConnect" id="2561">
    <property type="glycosylation" value="2 N-Linked glycans (1 site)"/>
</dbReference>
<dbReference type="GlyCosmos" id="Q8VCM8">
    <property type="glycosylation" value="2 sites, 1 glycan"/>
</dbReference>
<dbReference type="GlyGen" id="Q8VCM8">
    <property type="glycosylation" value="2 sites, 2 N-linked glycans (1 site)"/>
</dbReference>
<dbReference type="iPTMnet" id="Q8VCM8"/>
<dbReference type="PhosphoSitePlus" id="Q8VCM8"/>
<dbReference type="SwissPalm" id="Q8VCM8"/>
<dbReference type="jPOST" id="Q8VCM8"/>
<dbReference type="PaxDb" id="10090-ENSMUSP00000020463"/>
<dbReference type="PeptideAtlas" id="Q8VCM8"/>
<dbReference type="ProteomicsDB" id="252791"/>
<dbReference type="Pumba" id="Q8VCM8"/>
<dbReference type="Antibodypedia" id="1889">
    <property type="antibodies" value="142 antibodies from 33 providers"/>
</dbReference>
<dbReference type="DNASU" id="103425"/>
<dbReference type="Ensembl" id="ENSMUST00000020463.14">
    <property type="protein sequence ID" value="ENSMUSP00000020463.8"/>
    <property type="gene ID" value="ENSMUSG00000020238.15"/>
</dbReference>
<dbReference type="GeneID" id="103425"/>
<dbReference type="KEGG" id="mmu:103425"/>
<dbReference type="UCSC" id="uc007gig.1">
    <property type="organism name" value="mouse"/>
</dbReference>
<dbReference type="AGR" id="MGI:1926081"/>
<dbReference type="CTD" id="56926"/>
<dbReference type="MGI" id="MGI:1926081">
    <property type="gene designation" value="Ncln"/>
</dbReference>
<dbReference type="VEuPathDB" id="HostDB:ENSMUSG00000020238"/>
<dbReference type="eggNOG" id="KOG2526">
    <property type="taxonomic scope" value="Eukaryota"/>
</dbReference>
<dbReference type="GeneTree" id="ENSGT00500000044945"/>
<dbReference type="InParanoid" id="Q8VCM8"/>
<dbReference type="OMA" id="WSTSRHC"/>
<dbReference type="OrthoDB" id="5913609at2759"/>
<dbReference type="PhylomeDB" id="Q8VCM8"/>
<dbReference type="TreeFam" id="TF105849"/>
<dbReference type="BioGRID-ORCS" id="103425">
    <property type="hits" value="6 hits in 77 CRISPR screens"/>
</dbReference>
<dbReference type="CD-CODE" id="CE726F99">
    <property type="entry name" value="Postsynaptic density"/>
</dbReference>
<dbReference type="ChiTaRS" id="Ncln">
    <property type="organism name" value="mouse"/>
</dbReference>
<dbReference type="PRO" id="PR:Q8VCM8"/>
<dbReference type="Proteomes" id="UP000000589">
    <property type="component" value="Chromosome 10"/>
</dbReference>
<dbReference type="RNAct" id="Q8VCM8">
    <property type="molecule type" value="protein"/>
</dbReference>
<dbReference type="Bgee" id="ENSMUSG00000020238">
    <property type="expression patterns" value="Expressed in ectoplacental cone and 244 other cell types or tissues"/>
</dbReference>
<dbReference type="ExpressionAtlas" id="Q8VCM8">
    <property type="expression patterns" value="baseline and differential"/>
</dbReference>
<dbReference type="GO" id="GO:0005789">
    <property type="term" value="C:endoplasmic reticulum membrane"/>
    <property type="evidence" value="ECO:0007669"/>
    <property type="project" value="UniProtKB-SubCell"/>
</dbReference>
<dbReference type="GO" id="GO:0160064">
    <property type="term" value="C:multi-pass translocon complex"/>
    <property type="evidence" value="ECO:0000250"/>
    <property type="project" value="UniProtKB"/>
</dbReference>
<dbReference type="GO" id="GO:0043022">
    <property type="term" value="F:ribosome binding"/>
    <property type="evidence" value="ECO:0000250"/>
    <property type="project" value="UniProtKB"/>
</dbReference>
<dbReference type="GO" id="GO:0160063">
    <property type="term" value="P:multi-pass transmembrane protein insertion into ER membrane"/>
    <property type="evidence" value="ECO:0000250"/>
    <property type="project" value="UniProtKB"/>
</dbReference>
<dbReference type="GO" id="GO:0050821">
    <property type="term" value="P:protein stabilization"/>
    <property type="evidence" value="ECO:0007669"/>
    <property type="project" value="Ensembl"/>
</dbReference>
<dbReference type="GO" id="GO:0061635">
    <property type="term" value="P:regulation of protein complex stability"/>
    <property type="evidence" value="ECO:0007669"/>
    <property type="project" value="Ensembl"/>
</dbReference>
<dbReference type="GO" id="GO:0043254">
    <property type="term" value="P:regulation of protein-containing complex assembly"/>
    <property type="evidence" value="ECO:0007669"/>
    <property type="project" value="Ensembl"/>
</dbReference>
<dbReference type="GO" id="GO:0009966">
    <property type="term" value="P:regulation of signal transduction"/>
    <property type="evidence" value="ECO:0007669"/>
    <property type="project" value="InterPro"/>
</dbReference>
<dbReference type="CDD" id="cd03882">
    <property type="entry name" value="M28_nicalin_like"/>
    <property type="match status" value="1"/>
</dbReference>
<dbReference type="FunFam" id="3.40.630.10:FF:000021">
    <property type="entry name" value="Nicalin"/>
    <property type="match status" value="1"/>
</dbReference>
<dbReference type="Gene3D" id="3.40.630.10">
    <property type="entry name" value="Zn peptidases"/>
    <property type="match status" value="1"/>
</dbReference>
<dbReference type="InterPro" id="IPR016574">
    <property type="entry name" value="Nicalin"/>
</dbReference>
<dbReference type="InterPro" id="IPR007484">
    <property type="entry name" value="Peptidase_M28"/>
</dbReference>
<dbReference type="PANTHER" id="PTHR31826">
    <property type="entry name" value="NICALIN"/>
    <property type="match status" value="1"/>
</dbReference>
<dbReference type="Pfam" id="PF04389">
    <property type="entry name" value="Peptidase_M28"/>
    <property type="match status" value="1"/>
</dbReference>
<dbReference type="PIRSF" id="PIRSF011018">
    <property type="entry name" value="Nicalin"/>
    <property type="match status" value="1"/>
</dbReference>
<dbReference type="SUPFAM" id="SSF53187">
    <property type="entry name" value="Zn-dependent exopeptidases"/>
    <property type="match status" value="1"/>
</dbReference>